<accession>Q83BB9</accession>
<proteinExistence type="inferred from homology"/>
<feature type="chain" id="PRO_0000178330" description="Small ribosomal subunit protein bS21">
    <location>
        <begin position="1"/>
        <end position="74"/>
    </location>
</feature>
<keyword id="KW-1185">Reference proteome</keyword>
<keyword id="KW-0687">Ribonucleoprotein</keyword>
<keyword id="KW-0689">Ribosomal protein</keyword>
<comment type="similarity">
    <text evidence="1">Belongs to the bacterial ribosomal protein bS21 family.</text>
</comment>
<comment type="sequence caution" evidence="2">
    <conflict type="erroneous initiation">
        <sequence resource="EMBL-CDS" id="AAO91090"/>
    </conflict>
</comment>
<protein>
    <recommendedName>
        <fullName evidence="1">Small ribosomal subunit protein bS21</fullName>
    </recommendedName>
    <alternativeName>
        <fullName evidence="2">30S ribosomal protein S21</fullName>
    </alternativeName>
</protein>
<dbReference type="EMBL" id="AE016828">
    <property type="protein sequence ID" value="AAO91090.2"/>
    <property type="status" value="ALT_INIT"/>
    <property type="molecule type" value="Genomic_DNA"/>
</dbReference>
<dbReference type="RefSeq" id="NP_820576.3">
    <property type="nucleotide sequence ID" value="NC_002971.4"/>
</dbReference>
<dbReference type="RefSeq" id="WP_005772127.1">
    <property type="nucleotide sequence ID" value="NZ_CDBG01000001.1"/>
</dbReference>
<dbReference type="SMR" id="Q83BB9"/>
<dbReference type="STRING" id="227377.CBU_1593"/>
<dbReference type="EnsemblBacteria" id="AAO91090">
    <property type="protein sequence ID" value="AAO91090"/>
    <property type="gene ID" value="CBU_1593"/>
</dbReference>
<dbReference type="GeneID" id="1209503"/>
<dbReference type="KEGG" id="cbu:CBU_1593"/>
<dbReference type="PATRIC" id="fig|227377.7.peg.1595"/>
<dbReference type="eggNOG" id="COG0828">
    <property type="taxonomic scope" value="Bacteria"/>
</dbReference>
<dbReference type="HOGENOM" id="CLU_159258_1_1_6"/>
<dbReference type="OrthoDB" id="9799244at2"/>
<dbReference type="Proteomes" id="UP000002671">
    <property type="component" value="Chromosome"/>
</dbReference>
<dbReference type="GO" id="GO:1990904">
    <property type="term" value="C:ribonucleoprotein complex"/>
    <property type="evidence" value="ECO:0007669"/>
    <property type="project" value="UniProtKB-KW"/>
</dbReference>
<dbReference type="GO" id="GO:0005840">
    <property type="term" value="C:ribosome"/>
    <property type="evidence" value="ECO:0007669"/>
    <property type="project" value="UniProtKB-KW"/>
</dbReference>
<dbReference type="GO" id="GO:0003735">
    <property type="term" value="F:structural constituent of ribosome"/>
    <property type="evidence" value="ECO:0007669"/>
    <property type="project" value="InterPro"/>
</dbReference>
<dbReference type="GO" id="GO:0006412">
    <property type="term" value="P:translation"/>
    <property type="evidence" value="ECO:0007669"/>
    <property type="project" value="UniProtKB-UniRule"/>
</dbReference>
<dbReference type="Gene3D" id="1.20.5.1150">
    <property type="entry name" value="Ribosomal protein S8"/>
    <property type="match status" value="1"/>
</dbReference>
<dbReference type="HAMAP" id="MF_00358">
    <property type="entry name" value="Ribosomal_bS21"/>
    <property type="match status" value="1"/>
</dbReference>
<dbReference type="InterPro" id="IPR001911">
    <property type="entry name" value="Ribosomal_bS21"/>
</dbReference>
<dbReference type="InterPro" id="IPR038380">
    <property type="entry name" value="Ribosomal_bS21_sf"/>
</dbReference>
<dbReference type="NCBIfam" id="TIGR00030">
    <property type="entry name" value="S21p"/>
    <property type="match status" value="1"/>
</dbReference>
<dbReference type="PANTHER" id="PTHR21109">
    <property type="entry name" value="MITOCHONDRIAL 28S RIBOSOMAL PROTEIN S21"/>
    <property type="match status" value="1"/>
</dbReference>
<dbReference type="PANTHER" id="PTHR21109:SF22">
    <property type="entry name" value="SMALL RIBOSOMAL SUBUNIT PROTEIN BS21"/>
    <property type="match status" value="1"/>
</dbReference>
<dbReference type="Pfam" id="PF01165">
    <property type="entry name" value="Ribosomal_S21"/>
    <property type="match status" value="1"/>
</dbReference>
<dbReference type="PRINTS" id="PR00976">
    <property type="entry name" value="RIBOSOMALS21"/>
</dbReference>
<gene>
    <name evidence="1" type="primary">rpsU</name>
    <name type="ordered locus">CBU_1593</name>
</gene>
<evidence type="ECO:0000255" key="1">
    <source>
        <dbReference type="HAMAP-Rule" id="MF_00358"/>
    </source>
</evidence>
<evidence type="ECO:0000305" key="2"/>
<reference key="1">
    <citation type="journal article" date="2003" name="Proc. Natl. Acad. Sci. U.S.A.">
        <title>Complete genome sequence of the Q-fever pathogen, Coxiella burnetii.</title>
        <authorList>
            <person name="Seshadri R."/>
            <person name="Paulsen I.T."/>
            <person name="Eisen J.A."/>
            <person name="Read T.D."/>
            <person name="Nelson K.E."/>
            <person name="Nelson W.C."/>
            <person name="Ward N.L."/>
            <person name="Tettelin H."/>
            <person name="Davidsen T.M."/>
            <person name="Beanan M.J."/>
            <person name="DeBoy R.T."/>
            <person name="Daugherty S.C."/>
            <person name="Brinkac L.M."/>
            <person name="Madupu R."/>
            <person name="Dodson R.J."/>
            <person name="Khouri H.M."/>
            <person name="Lee K.H."/>
            <person name="Carty H.A."/>
            <person name="Scanlan D."/>
            <person name="Heinzen R.A."/>
            <person name="Thompson H.A."/>
            <person name="Samuel J.E."/>
            <person name="Fraser C.M."/>
            <person name="Heidelberg J.F."/>
        </authorList>
    </citation>
    <scope>NUCLEOTIDE SEQUENCE [LARGE SCALE GENOMIC DNA]</scope>
    <source>
        <strain>RSA 493 / Nine Mile phase I</strain>
    </source>
</reference>
<sequence length="74" mass="8905">MPMIDVPDNNAFDVAMRRFKRACEKAGILSKLRQIEYYEKPTSKRKRKRAAAVKRYAKKLQKEQEALERERTRY</sequence>
<organism>
    <name type="scientific">Coxiella burnetii (strain RSA 493 / Nine Mile phase I)</name>
    <dbReference type="NCBI Taxonomy" id="227377"/>
    <lineage>
        <taxon>Bacteria</taxon>
        <taxon>Pseudomonadati</taxon>
        <taxon>Pseudomonadota</taxon>
        <taxon>Gammaproteobacteria</taxon>
        <taxon>Legionellales</taxon>
        <taxon>Coxiellaceae</taxon>
        <taxon>Coxiella</taxon>
    </lineage>
</organism>
<name>RS21_COXBU</name>